<comment type="function">
    <text evidence="1">Major role in the synthesis of nucleoside triphosphates other than ATP. The ATP gamma phosphate is transferred to the NDP beta phosphate via a ping-pong mechanism, using a phosphorylated active-site intermediate.</text>
</comment>
<comment type="catalytic activity">
    <reaction evidence="1">
        <text>a 2'-deoxyribonucleoside 5'-diphosphate + ATP = a 2'-deoxyribonucleoside 5'-triphosphate + ADP</text>
        <dbReference type="Rhea" id="RHEA:44640"/>
        <dbReference type="ChEBI" id="CHEBI:30616"/>
        <dbReference type="ChEBI" id="CHEBI:61560"/>
        <dbReference type="ChEBI" id="CHEBI:73316"/>
        <dbReference type="ChEBI" id="CHEBI:456216"/>
        <dbReference type="EC" id="2.7.4.6"/>
    </reaction>
</comment>
<comment type="catalytic activity">
    <reaction evidence="1">
        <text>a ribonucleoside 5'-diphosphate + ATP = a ribonucleoside 5'-triphosphate + ADP</text>
        <dbReference type="Rhea" id="RHEA:18113"/>
        <dbReference type="ChEBI" id="CHEBI:30616"/>
        <dbReference type="ChEBI" id="CHEBI:57930"/>
        <dbReference type="ChEBI" id="CHEBI:61557"/>
        <dbReference type="ChEBI" id="CHEBI:456216"/>
        <dbReference type="EC" id="2.7.4.6"/>
    </reaction>
</comment>
<comment type="cofactor">
    <cofactor evidence="1">
        <name>Mg(2+)</name>
        <dbReference type="ChEBI" id="CHEBI:18420"/>
    </cofactor>
</comment>
<comment type="subunit">
    <text evidence="1">Homotetramer.</text>
</comment>
<comment type="subcellular location">
    <subcellularLocation>
        <location evidence="1">Cytoplasm</location>
    </subcellularLocation>
</comment>
<comment type="similarity">
    <text evidence="1">Belongs to the NDK family.</text>
</comment>
<accession>Q15R52</accession>
<name>NDK_PSEA6</name>
<feature type="chain" id="PRO_0000267793" description="Nucleoside diphosphate kinase">
    <location>
        <begin position="1"/>
        <end position="143"/>
    </location>
</feature>
<feature type="active site" description="Pros-phosphohistidine intermediate" evidence="1">
    <location>
        <position position="117"/>
    </location>
</feature>
<feature type="binding site" evidence="1">
    <location>
        <position position="11"/>
    </location>
    <ligand>
        <name>ATP</name>
        <dbReference type="ChEBI" id="CHEBI:30616"/>
    </ligand>
</feature>
<feature type="binding site" evidence="1">
    <location>
        <position position="59"/>
    </location>
    <ligand>
        <name>ATP</name>
        <dbReference type="ChEBI" id="CHEBI:30616"/>
    </ligand>
</feature>
<feature type="binding site" evidence="1">
    <location>
        <position position="87"/>
    </location>
    <ligand>
        <name>ATP</name>
        <dbReference type="ChEBI" id="CHEBI:30616"/>
    </ligand>
</feature>
<feature type="binding site" evidence="1">
    <location>
        <position position="93"/>
    </location>
    <ligand>
        <name>ATP</name>
        <dbReference type="ChEBI" id="CHEBI:30616"/>
    </ligand>
</feature>
<feature type="binding site" evidence="1">
    <location>
        <position position="104"/>
    </location>
    <ligand>
        <name>ATP</name>
        <dbReference type="ChEBI" id="CHEBI:30616"/>
    </ligand>
</feature>
<feature type="binding site" evidence="1">
    <location>
        <position position="114"/>
    </location>
    <ligand>
        <name>ATP</name>
        <dbReference type="ChEBI" id="CHEBI:30616"/>
    </ligand>
</feature>
<organism>
    <name type="scientific">Pseudoalteromonas atlantica (strain T6c / ATCC BAA-1087)</name>
    <dbReference type="NCBI Taxonomy" id="3042615"/>
    <lineage>
        <taxon>Bacteria</taxon>
        <taxon>Pseudomonadati</taxon>
        <taxon>Pseudomonadota</taxon>
        <taxon>Gammaproteobacteria</taxon>
        <taxon>Alteromonadales</taxon>
        <taxon>Alteromonadaceae</taxon>
        <taxon>Paraglaciecola</taxon>
    </lineage>
</organism>
<keyword id="KW-0067">ATP-binding</keyword>
<keyword id="KW-0963">Cytoplasm</keyword>
<keyword id="KW-0418">Kinase</keyword>
<keyword id="KW-0460">Magnesium</keyword>
<keyword id="KW-0479">Metal-binding</keyword>
<keyword id="KW-0546">Nucleotide metabolism</keyword>
<keyword id="KW-0547">Nucleotide-binding</keyword>
<keyword id="KW-0597">Phosphoprotein</keyword>
<keyword id="KW-0808">Transferase</keyword>
<sequence>MALERTFSIIKPDAVAKNVIGAIYNRFESAGLRIVASKMLHLSKEQAEGFYAEHSERPFFGALVEFMTSGPVMVQVLEGENAVLKNREIMGATNPAEALAGTLRADYAASIDENACHGSDAPESAAREIAYFFSDEEICPRTR</sequence>
<protein>
    <recommendedName>
        <fullName evidence="1">Nucleoside diphosphate kinase</fullName>
        <shortName evidence="1">NDK</shortName>
        <shortName evidence="1">NDP kinase</shortName>
        <ecNumber evidence="1">2.7.4.6</ecNumber>
    </recommendedName>
    <alternativeName>
        <fullName evidence="1">Nucleoside-2-P kinase</fullName>
    </alternativeName>
</protein>
<reference key="1">
    <citation type="submission" date="2006-06" db="EMBL/GenBank/DDBJ databases">
        <title>Complete sequence of Pseudoalteromonas atlantica T6c.</title>
        <authorList>
            <consortium name="US DOE Joint Genome Institute"/>
            <person name="Copeland A."/>
            <person name="Lucas S."/>
            <person name="Lapidus A."/>
            <person name="Barry K."/>
            <person name="Detter J.C."/>
            <person name="Glavina del Rio T."/>
            <person name="Hammon N."/>
            <person name="Israni S."/>
            <person name="Dalin E."/>
            <person name="Tice H."/>
            <person name="Pitluck S."/>
            <person name="Saunders E."/>
            <person name="Brettin T."/>
            <person name="Bruce D."/>
            <person name="Han C."/>
            <person name="Tapia R."/>
            <person name="Gilna P."/>
            <person name="Schmutz J."/>
            <person name="Larimer F."/>
            <person name="Land M."/>
            <person name="Hauser L."/>
            <person name="Kyrpides N."/>
            <person name="Kim E."/>
            <person name="Karls A.C."/>
            <person name="Bartlett D."/>
            <person name="Higgins B.P."/>
            <person name="Richardson P."/>
        </authorList>
    </citation>
    <scope>NUCLEOTIDE SEQUENCE [LARGE SCALE GENOMIC DNA]</scope>
    <source>
        <strain>T6c / ATCC BAA-1087</strain>
    </source>
</reference>
<proteinExistence type="inferred from homology"/>
<dbReference type="EC" id="2.7.4.6" evidence="1"/>
<dbReference type="EMBL" id="CP000388">
    <property type="protein sequence ID" value="ABG41636.1"/>
    <property type="molecule type" value="Genomic_DNA"/>
</dbReference>
<dbReference type="RefSeq" id="WP_006993112.1">
    <property type="nucleotide sequence ID" value="NC_008228.1"/>
</dbReference>
<dbReference type="SMR" id="Q15R52"/>
<dbReference type="STRING" id="342610.Patl_3130"/>
<dbReference type="KEGG" id="pat:Patl_3130"/>
<dbReference type="eggNOG" id="COG0105">
    <property type="taxonomic scope" value="Bacteria"/>
</dbReference>
<dbReference type="HOGENOM" id="CLU_060216_8_1_6"/>
<dbReference type="OrthoDB" id="9801161at2"/>
<dbReference type="Proteomes" id="UP000001981">
    <property type="component" value="Chromosome"/>
</dbReference>
<dbReference type="GO" id="GO:0005737">
    <property type="term" value="C:cytoplasm"/>
    <property type="evidence" value="ECO:0007669"/>
    <property type="project" value="UniProtKB-SubCell"/>
</dbReference>
<dbReference type="GO" id="GO:0005524">
    <property type="term" value="F:ATP binding"/>
    <property type="evidence" value="ECO:0007669"/>
    <property type="project" value="UniProtKB-UniRule"/>
</dbReference>
<dbReference type="GO" id="GO:0046872">
    <property type="term" value="F:metal ion binding"/>
    <property type="evidence" value="ECO:0007669"/>
    <property type="project" value="UniProtKB-KW"/>
</dbReference>
<dbReference type="GO" id="GO:0004550">
    <property type="term" value="F:nucleoside diphosphate kinase activity"/>
    <property type="evidence" value="ECO:0007669"/>
    <property type="project" value="UniProtKB-UniRule"/>
</dbReference>
<dbReference type="GO" id="GO:0006241">
    <property type="term" value="P:CTP biosynthetic process"/>
    <property type="evidence" value="ECO:0007669"/>
    <property type="project" value="UniProtKB-UniRule"/>
</dbReference>
<dbReference type="GO" id="GO:0006183">
    <property type="term" value="P:GTP biosynthetic process"/>
    <property type="evidence" value="ECO:0007669"/>
    <property type="project" value="UniProtKB-UniRule"/>
</dbReference>
<dbReference type="GO" id="GO:0006228">
    <property type="term" value="P:UTP biosynthetic process"/>
    <property type="evidence" value="ECO:0007669"/>
    <property type="project" value="UniProtKB-UniRule"/>
</dbReference>
<dbReference type="CDD" id="cd04413">
    <property type="entry name" value="NDPk_I"/>
    <property type="match status" value="1"/>
</dbReference>
<dbReference type="FunFam" id="3.30.70.141:FF:000001">
    <property type="entry name" value="Nucleoside diphosphate kinase"/>
    <property type="match status" value="1"/>
</dbReference>
<dbReference type="Gene3D" id="3.30.70.141">
    <property type="entry name" value="Nucleoside diphosphate kinase-like domain"/>
    <property type="match status" value="1"/>
</dbReference>
<dbReference type="HAMAP" id="MF_00451">
    <property type="entry name" value="NDP_kinase"/>
    <property type="match status" value="1"/>
</dbReference>
<dbReference type="InterPro" id="IPR034907">
    <property type="entry name" value="NDK-like_dom"/>
</dbReference>
<dbReference type="InterPro" id="IPR036850">
    <property type="entry name" value="NDK-like_dom_sf"/>
</dbReference>
<dbReference type="InterPro" id="IPR001564">
    <property type="entry name" value="Nucleoside_diP_kinase"/>
</dbReference>
<dbReference type="InterPro" id="IPR023005">
    <property type="entry name" value="Nucleoside_diP_kinase_AS"/>
</dbReference>
<dbReference type="NCBIfam" id="NF001908">
    <property type="entry name" value="PRK00668.1"/>
    <property type="match status" value="1"/>
</dbReference>
<dbReference type="PANTHER" id="PTHR46161">
    <property type="entry name" value="NUCLEOSIDE DIPHOSPHATE KINASE"/>
    <property type="match status" value="1"/>
</dbReference>
<dbReference type="PANTHER" id="PTHR46161:SF3">
    <property type="entry name" value="NUCLEOSIDE DIPHOSPHATE KINASE DDB_G0292928-RELATED"/>
    <property type="match status" value="1"/>
</dbReference>
<dbReference type="Pfam" id="PF00334">
    <property type="entry name" value="NDK"/>
    <property type="match status" value="1"/>
</dbReference>
<dbReference type="PRINTS" id="PR01243">
    <property type="entry name" value="NUCDPKINASE"/>
</dbReference>
<dbReference type="SMART" id="SM00562">
    <property type="entry name" value="NDK"/>
    <property type="match status" value="1"/>
</dbReference>
<dbReference type="SUPFAM" id="SSF54919">
    <property type="entry name" value="Nucleoside diphosphate kinase, NDK"/>
    <property type="match status" value="1"/>
</dbReference>
<dbReference type="PROSITE" id="PS00469">
    <property type="entry name" value="NDPK"/>
    <property type="match status" value="1"/>
</dbReference>
<dbReference type="PROSITE" id="PS51374">
    <property type="entry name" value="NDPK_LIKE"/>
    <property type="match status" value="1"/>
</dbReference>
<gene>
    <name evidence="1" type="primary">ndk</name>
    <name type="ordered locus">Patl_3130</name>
</gene>
<evidence type="ECO:0000255" key="1">
    <source>
        <dbReference type="HAMAP-Rule" id="MF_00451"/>
    </source>
</evidence>